<proteinExistence type="evidence at transcript level"/>
<evidence type="ECO:0000250" key="1">
    <source>
        <dbReference type="UniProtKB" id="Q6VAA6"/>
    </source>
</evidence>
<evidence type="ECO:0000250" key="2">
    <source>
        <dbReference type="UniProtKB" id="Q9M156"/>
    </source>
</evidence>
<evidence type="ECO:0000303" key="3">
    <source>
    </source>
</evidence>
<evidence type="ECO:0000305" key="4"/>
<name>U71E1_STERE</name>
<protein>
    <recommendedName>
        <fullName evidence="3">UDP-glycosyltransferase 71E1</fullName>
        <ecNumber evidence="4">2.4.1.-</ecNumber>
    </recommendedName>
</protein>
<keyword id="KW-0328">Glycosyltransferase</keyword>
<keyword id="KW-0808">Transferase</keyword>
<organism>
    <name type="scientific">Stevia rebaudiana</name>
    <name type="common">Stevia</name>
    <name type="synonym">Eupatorium rebaudianum</name>
    <dbReference type="NCBI Taxonomy" id="55670"/>
    <lineage>
        <taxon>Eukaryota</taxon>
        <taxon>Viridiplantae</taxon>
        <taxon>Streptophyta</taxon>
        <taxon>Embryophyta</taxon>
        <taxon>Tracheophyta</taxon>
        <taxon>Spermatophyta</taxon>
        <taxon>Magnoliopsida</taxon>
        <taxon>eudicotyledons</taxon>
        <taxon>Gunneridae</taxon>
        <taxon>Pentapetalae</taxon>
        <taxon>asterids</taxon>
        <taxon>campanulids</taxon>
        <taxon>Asterales</taxon>
        <taxon>Asteraceae</taxon>
        <taxon>Asteroideae</taxon>
        <taxon>Heliantheae alliance</taxon>
        <taxon>Eupatorieae</taxon>
        <taxon>Stevia</taxon>
    </lineage>
</organism>
<comment type="function">
    <text evidence="1">May glycosylate diterpenes or flavonols in leaves.</text>
</comment>
<comment type="similarity">
    <text evidence="4">Belongs to the UDP-glycosyltransferase family.</text>
</comment>
<reference key="1">
    <citation type="journal article" date="2005" name="Plant J.">
        <title>Functional genomics uncovers three glucosyltransferases involved in the synthesis of the major sweet glucosides of Stevia rebaudiana.</title>
        <authorList>
            <person name="Richman A."/>
            <person name="Swanson A."/>
            <person name="Humphrey T."/>
            <person name="Chapman R."/>
            <person name="McGarvey B."/>
            <person name="Pocs R."/>
            <person name="Brandle J."/>
        </authorList>
    </citation>
    <scope>NUCLEOTIDE SEQUENCE [MRNA]</scope>
    <source>
        <tissue>Leaf</tissue>
    </source>
</reference>
<gene>
    <name evidence="3" type="primary">UGT71E1</name>
</gene>
<feature type="chain" id="PRO_0000434462" description="UDP-glycosyltransferase 71E1">
    <location>
        <begin position="1"/>
        <end position="474"/>
    </location>
</feature>
<feature type="binding site" evidence="2">
    <location>
        <position position="275"/>
    </location>
    <ligand>
        <name>UDP-alpha-D-glucose</name>
        <dbReference type="ChEBI" id="CHEBI:58885"/>
    </ligand>
</feature>
<feature type="binding site" evidence="2">
    <location>
        <begin position="341"/>
        <end position="342"/>
    </location>
    <ligand>
        <name>UDP-alpha-D-glucose</name>
        <dbReference type="ChEBI" id="CHEBI:58885"/>
    </ligand>
</feature>
<feature type="binding site" evidence="2">
    <location>
        <begin position="359"/>
        <end position="367"/>
    </location>
    <ligand>
        <name>UDP-alpha-D-glucose</name>
        <dbReference type="ChEBI" id="CHEBI:58885"/>
    </ligand>
</feature>
<feature type="binding site" evidence="2">
    <location>
        <begin position="381"/>
        <end position="384"/>
    </location>
    <ligand>
        <name>UDP-alpha-D-glucose</name>
        <dbReference type="ChEBI" id="CHEBI:58885"/>
    </ligand>
</feature>
<accession>Q6VAB2</accession>
<dbReference type="EC" id="2.4.1.-" evidence="4"/>
<dbReference type="EMBL" id="AY345976">
    <property type="protein sequence ID" value="AAR06914.1"/>
    <property type="molecule type" value="mRNA"/>
</dbReference>
<dbReference type="SMR" id="Q6VAB2"/>
<dbReference type="CAZy" id="GT1">
    <property type="family name" value="Glycosyltransferase Family 1"/>
</dbReference>
<dbReference type="SABIO-RK" id="Q6VAB2"/>
<dbReference type="GO" id="GO:0035251">
    <property type="term" value="F:UDP-glucosyltransferase activity"/>
    <property type="evidence" value="ECO:0007669"/>
    <property type="project" value="InterPro"/>
</dbReference>
<dbReference type="CDD" id="cd03784">
    <property type="entry name" value="GT1_Gtf-like"/>
    <property type="match status" value="1"/>
</dbReference>
<dbReference type="FunFam" id="3.40.50.2000:FF:000056">
    <property type="entry name" value="Glycosyltransferase"/>
    <property type="match status" value="1"/>
</dbReference>
<dbReference type="FunFam" id="3.40.50.2000:FF:000080">
    <property type="entry name" value="Glycosyltransferase"/>
    <property type="match status" value="1"/>
</dbReference>
<dbReference type="Gene3D" id="3.40.50.2000">
    <property type="entry name" value="Glycogen Phosphorylase B"/>
    <property type="match status" value="2"/>
</dbReference>
<dbReference type="InterPro" id="IPR050481">
    <property type="entry name" value="UDP-glycosyltransf_plant"/>
</dbReference>
<dbReference type="InterPro" id="IPR002213">
    <property type="entry name" value="UDP_glucos_trans"/>
</dbReference>
<dbReference type="InterPro" id="IPR035595">
    <property type="entry name" value="UDP_glycos_trans_CS"/>
</dbReference>
<dbReference type="PANTHER" id="PTHR48048">
    <property type="entry name" value="GLYCOSYLTRANSFERASE"/>
    <property type="match status" value="1"/>
</dbReference>
<dbReference type="PANTHER" id="PTHR48048:SF72">
    <property type="entry name" value="GLYCOSYLTRANSFERASE"/>
    <property type="match status" value="1"/>
</dbReference>
<dbReference type="Pfam" id="PF00201">
    <property type="entry name" value="UDPGT"/>
    <property type="match status" value="1"/>
</dbReference>
<dbReference type="SUPFAM" id="SSF53756">
    <property type="entry name" value="UDP-Glycosyltransferase/glycogen phosphorylase"/>
    <property type="match status" value="1"/>
</dbReference>
<dbReference type="PROSITE" id="PS00375">
    <property type="entry name" value="UDPGT"/>
    <property type="match status" value="1"/>
</dbReference>
<sequence length="474" mass="52743">MSTSELVFIPSPGAGHLPPTVELAKLLLHRDQRLSVTIIVMNLWLGPKHNTEARPCVPSLRFVDIPCDESTMALISPNTFISAFVEHHKPRVRDIVRGIIESDSVRLAGFVLDMFCMPMSDVANEFGVPSYNYFTSGAATLGLMFHLQWKRDHEGYDATELKNSDTELSVPSYVNPVPAKVLPEVVLDKEGGSKMFLDLAERIRESKGIIVNSCQAIERHALEYLSSNNNGIPPVFPVGPILNLENKKDDAKTDEIMRWLNEQPESSVVFLCFGSMGSFNEKQVKEIAVAIERSGHRFLWSLRRPTPKEKIEFPKEYENLEEVLPEGFLKRTSSIGKVIGWAPQMAVLSHPSVGGFVSHCGWNSTLESMWCGVPMAAWPLYAEQTLNAFLLVVELGLAAEIRMDYRTDTKAGYDGGMEVTVEEIEDGIRKLMSDGEIRNKVKDVKEKSRAAVVEGGSSYASIGKFIEHVSNVTI</sequence>